<reference key="1">
    <citation type="journal article" date="1992" name="Proc. Natl. Acad. Sci. U.S.A.">
        <title>DHR3: a Drosophila steroid receptor homolog.</title>
        <authorList>
            <person name="Koelle M.R."/>
            <person name="Segraves W.A."/>
            <person name="Hogness D.S."/>
        </authorList>
    </citation>
    <scope>NUCLEOTIDE SEQUENCE [MRNA]</scope>
</reference>
<reference key="2">
    <citation type="journal article" date="2000" name="Science">
        <title>The genome sequence of Drosophila melanogaster.</title>
        <authorList>
            <person name="Adams M.D."/>
            <person name="Celniker S.E."/>
            <person name="Holt R.A."/>
            <person name="Evans C.A."/>
            <person name="Gocayne J.D."/>
            <person name="Amanatides P.G."/>
            <person name="Scherer S.E."/>
            <person name="Li P.W."/>
            <person name="Hoskins R.A."/>
            <person name="Galle R.F."/>
            <person name="George R.A."/>
            <person name="Lewis S.E."/>
            <person name="Richards S."/>
            <person name="Ashburner M."/>
            <person name="Henderson S.N."/>
            <person name="Sutton G.G."/>
            <person name="Wortman J.R."/>
            <person name="Yandell M.D."/>
            <person name="Zhang Q."/>
            <person name="Chen L.X."/>
            <person name="Brandon R.C."/>
            <person name="Rogers Y.-H.C."/>
            <person name="Blazej R.G."/>
            <person name="Champe M."/>
            <person name="Pfeiffer B.D."/>
            <person name="Wan K.H."/>
            <person name="Doyle C."/>
            <person name="Baxter E.G."/>
            <person name="Helt G."/>
            <person name="Nelson C.R."/>
            <person name="Miklos G.L.G."/>
            <person name="Abril J.F."/>
            <person name="Agbayani A."/>
            <person name="An H.-J."/>
            <person name="Andrews-Pfannkoch C."/>
            <person name="Baldwin D."/>
            <person name="Ballew R.M."/>
            <person name="Basu A."/>
            <person name="Baxendale J."/>
            <person name="Bayraktaroglu L."/>
            <person name="Beasley E.M."/>
            <person name="Beeson K.Y."/>
            <person name="Benos P.V."/>
            <person name="Berman B.P."/>
            <person name="Bhandari D."/>
            <person name="Bolshakov S."/>
            <person name="Borkova D."/>
            <person name="Botchan M.R."/>
            <person name="Bouck J."/>
            <person name="Brokstein P."/>
            <person name="Brottier P."/>
            <person name="Burtis K.C."/>
            <person name="Busam D.A."/>
            <person name="Butler H."/>
            <person name="Cadieu E."/>
            <person name="Center A."/>
            <person name="Chandra I."/>
            <person name="Cherry J.M."/>
            <person name="Cawley S."/>
            <person name="Dahlke C."/>
            <person name="Davenport L.B."/>
            <person name="Davies P."/>
            <person name="de Pablos B."/>
            <person name="Delcher A."/>
            <person name="Deng Z."/>
            <person name="Mays A.D."/>
            <person name="Dew I."/>
            <person name="Dietz S.M."/>
            <person name="Dodson K."/>
            <person name="Doup L.E."/>
            <person name="Downes M."/>
            <person name="Dugan-Rocha S."/>
            <person name="Dunkov B.C."/>
            <person name="Dunn P."/>
            <person name="Durbin K.J."/>
            <person name="Evangelista C.C."/>
            <person name="Ferraz C."/>
            <person name="Ferriera S."/>
            <person name="Fleischmann W."/>
            <person name="Fosler C."/>
            <person name="Gabrielian A.E."/>
            <person name="Garg N.S."/>
            <person name="Gelbart W.M."/>
            <person name="Glasser K."/>
            <person name="Glodek A."/>
            <person name="Gong F."/>
            <person name="Gorrell J.H."/>
            <person name="Gu Z."/>
            <person name="Guan P."/>
            <person name="Harris M."/>
            <person name="Harris N.L."/>
            <person name="Harvey D.A."/>
            <person name="Heiman T.J."/>
            <person name="Hernandez J.R."/>
            <person name="Houck J."/>
            <person name="Hostin D."/>
            <person name="Houston K.A."/>
            <person name="Howland T.J."/>
            <person name="Wei M.-H."/>
            <person name="Ibegwam C."/>
            <person name="Jalali M."/>
            <person name="Kalush F."/>
            <person name="Karpen G.H."/>
            <person name="Ke Z."/>
            <person name="Kennison J.A."/>
            <person name="Ketchum K.A."/>
            <person name="Kimmel B.E."/>
            <person name="Kodira C.D."/>
            <person name="Kraft C.L."/>
            <person name="Kravitz S."/>
            <person name="Kulp D."/>
            <person name="Lai Z."/>
            <person name="Lasko P."/>
            <person name="Lei Y."/>
            <person name="Levitsky A.A."/>
            <person name="Li J.H."/>
            <person name="Li Z."/>
            <person name="Liang Y."/>
            <person name="Lin X."/>
            <person name="Liu X."/>
            <person name="Mattei B."/>
            <person name="McIntosh T.C."/>
            <person name="McLeod M.P."/>
            <person name="McPherson D."/>
            <person name="Merkulov G."/>
            <person name="Milshina N.V."/>
            <person name="Mobarry C."/>
            <person name="Morris J."/>
            <person name="Moshrefi A."/>
            <person name="Mount S.M."/>
            <person name="Moy M."/>
            <person name="Murphy B."/>
            <person name="Murphy L."/>
            <person name="Muzny D.M."/>
            <person name="Nelson D.L."/>
            <person name="Nelson D.R."/>
            <person name="Nelson K.A."/>
            <person name="Nixon K."/>
            <person name="Nusskern D.R."/>
            <person name="Pacleb J.M."/>
            <person name="Palazzolo M."/>
            <person name="Pittman G.S."/>
            <person name="Pan S."/>
            <person name="Pollard J."/>
            <person name="Puri V."/>
            <person name="Reese M.G."/>
            <person name="Reinert K."/>
            <person name="Remington K."/>
            <person name="Saunders R.D.C."/>
            <person name="Scheeler F."/>
            <person name="Shen H."/>
            <person name="Shue B.C."/>
            <person name="Siden-Kiamos I."/>
            <person name="Simpson M."/>
            <person name="Skupski M.P."/>
            <person name="Smith T.J."/>
            <person name="Spier E."/>
            <person name="Spradling A.C."/>
            <person name="Stapleton M."/>
            <person name="Strong R."/>
            <person name="Sun E."/>
            <person name="Svirskas R."/>
            <person name="Tector C."/>
            <person name="Turner R."/>
            <person name="Venter E."/>
            <person name="Wang A.H."/>
            <person name="Wang X."/>
            <person name="Wang Z.-Y."/>
            <person name="Wassarman D.A."/>
            <person name="Weinstock G.M."/>
            <person name="Weissenbach J."/>
            <person name="Williams S.M."/>
            <person name="Woodage T."/>
            <person name="Worley K.C."/>
            <person name="Wu D."/>
            <person name="Yang S."/>
            <person name="Yao Q.A."/>
            <person name="Ye J."/>
            <person name="Yeh R.-F."/>
            <person name="Zaveri J.S."/>
            <person name="Zhan M."/>
            <person name="Zhang G."/>
            <person name="Zhao Q."/>
            <person name="Zheng L."/>
            <person name="Zheng X.H."/>
            <person name="Zhong F.N."/>
            <person name="Zhong W."/>
            <person name="Zhou X."/>
            <person name="Zhu S.C."/>
            <person name="Zhu X."/>
            <person name="Smith H.O."/>
            <person name="Gibbs R.A."/>
            <person name="Myers E.W."/>
            <person name="Rubin G.M."/>
            <person name="Venter J.C."/>
        </authorList>
    </citation>
    <scope>NUCLEOTIDE SEQUENCE [LARGE SCALE GENOMIC DNA]</scope>
    <source>
        <strain>Berkeley</strain>
    </source>
</reference>
<reference key="3">
    <citation type="journal article" date="2002" name="Genome Biol.">
        <title>Annotation of the Drosophila melanogaster euchromatic genome: a systematic review.</title>
        <authorList>
            <person name="Misra S."/>
            <person name="Crosby M.A."/>
            <person name="Mungall C.J."/>
            <person name="Matthews B.B."/>
            <person name="Campbell K.S."/>
            <person name="Hradecky P."/>
            <person name="Huang Y."/>
            <person name="Kaminker J.S."/>
            <person name="Millburn G.H."/>
            <person name="Prochnik S.E."/>
            <person name="Smith C.D."/>
            <person name="Tupy J.L."/>
            <person name="Whitfield E.J."/>
            <person name="Bayraktaroglu L."/>
            <person name="Berman B.P."/>
            <person name="Bettencourt B.R."/>
            <person name="Celniker S.E."/>
            <person name="de Grey A.D.N.J."/>
            <person name="Drysdale R.A."/>
            <person name="Harris N.L."/>
            <person name="Richter J."/>
            <person name="Russo S."/>
            <person name="Schroeder A.J."/>
            <person name="Shu S.Q."/>
            <person name="Stapleton M."/>
            <person name="Yamada C."/>
            <person name="Ashburner M."/>
            <person name="Gelbart W.M."/>
            <person name="Rubin G.M."/>
            <person name="Lewis S.E."/>
        </authorList>
    </citation>
    <scope>GENOME REANNOTATION</scope>
    <source>
        <strain>Berkeley</strain>
    </source>
</reference>
<organism>
    <name type="scientific">Drosophila melanogaster</name>
    <name type="common">Fruit fly</name>
    <dbReference type="NCBI Taxonomy" id="7227"/>
    <lineage>
        <taxon>Eukaryota</taxon>
        <taxon>Metazoa</taxon>
        <taxon>Ecdysozoa</taxon>
        <taxon>Arthropoda</taxon>
        <taxon>Hexapoda</taxon>
        <taxon>Insecta</taxon>
        <taxon>Pterygota</taxon>
        <taxon>Neoptera</taxon>
        <taxon>Endopterygota</taxon>
        <taxon>Diptera</taxon>
        <taxon>Brachycera</taxon>
        <taxon>Muscomorpha</taxon>
        <taxon>Ephydroidea</taxon>
        <taxon>Drosophilidae</taxon>
        <taxon>Drosophila</taxon>
        <taxon>Sophophora</taxon>
    </lineage>
</organism>
<evidence type="ECO:0000255" key="1">
    <source>
        <dbReference type="PROSITE-ProRule" id="PRU00407"/>
    </source>
</evidence>
<evidence type="ECO:0000255" key="2">
    <source>
        <dbReference type="PROSITE-ProRule" id="PRU01189"/>
    </source>
</evidence>
<evidence type="ECO:0000256" key="3">
    <source>
        <dbReference type="SAM" id="MobiDB-lite"/>
    </source>
</evidence>
<evidence type="ECO:0000303" key="4">
    <source>
    </source>
</evidence>
<evidence type="ECO:0000305" key="5"/>
<evidence type="ECO:0000312" key="6">
    <source>
        <dbReference type="FlyBase" id="FBgn0000448"/>
    </source>
</evidence>
<dbReference type="EMBL" id="M90806">
    <property type="protein sequence ID" value="AAA28461.1"/>
    <property type="molecule type" value="mRNA"/>
</dbReference>
<dbReference type="EMBL" id="AE013599">
    <property type="protein sequence ID" value="AAF58826.1"/>
    <property type="molecule type" value="Genomic_DNA"/>
</dbReference>
<dbReference type="PIR" id="A46146">
    <property type="entry name" value="A46146"/>
</dbReference>
<dbReference type="RefSeq" id="NP_001246236.1">
    <property type="nucleotide sequence ID" value="NM_001259307.3"/>
</dbReference>
<dbReference type="RefSeq" id="NP_788303.1">
    <property type="nucleotide sequence ID" value="NM_176123.5"/>
</dbReference>
<dbReference type="SMR" id="P31396"/>
<dbReference type="BioGRID" id="61895">
    <property type="interactions" value="22"/>
</dbReference>
<dbReference type="FunCoup" id="P31396">
    <property type="interactions" value="403"/>
</dbReference>
<dbReference type="IntAct" id="P31396">
    <property type="interactions" value="9"/>
</dbReference>
<dbReference type="STRING" id="7227.FBpp0402891"/>
<dbReference type="ChEMBL" id="CHEMBL2321624"/>
<dbReference type="PaxDb" id="7227-FBpp0291630"/>
<dbReference type="EnsemblMetazoa" id="FBtr0088368">
    <property type="protein sequence ID" value="FBpp0087456"/>
    <property type="gene ID" value="FBgn0000448"/>
</dbReference>
<dbReference type="EnsemblMetazoa" id="FBtr0306345">
    <property type="protein sequence ID" value="FBpp0297438"/>
    <property type="gene ID" value="FBgn0000448"/>
</dbReference>
<dbReference type="GeneID" id="36073"/>
<dbReference type="KEGG" id="dme:Dmel_CG33183"/>
<dbReference type="AGR" id="FB:FBgn0000448"/>
<dbReference type="CTD" id="36073"/>
<dbReference type="FlyBase" id="FBgn0000448">
    <property type="gene designation" value="Hr3"/>
</dbReference>
<dbReference type="VEuPathDB" id="VectorBase:FBgn0000448"/>
<dbReference type="eggNOG" id="KOG4216">
    <property type="taxonomic scope" value="Eukaryota"/>
</dbReference>
<dbReference type="HOGENOM" id="CLU_007368_2_1_1"/>
<dbReference type="InParanoid" id="P31396"/>
<dbReference type="OMA" id="NVEHHEV"/>
<dbReference type="OrthoDB" id="8832025at2759"/>
<dbReference type="PhylomeDB" id="P31396"/>
<dbReference type="Reactome" id="R-DME-383280">
    <property type="pathway name" value="Nuclear Receptor transcription pathway"/>
</dbReference>
<dbReference type="Reactome" id="R-DME-4090294">
    <property type="pathway name" value="SUMOylation of intracellular receptors"/>
</dbReference>
<dbReference type="SignaLink" id="P31396"/>
<dbReference type="BioGRID-ORCS" id="36073">
    <property type="hits" value="0 hits in 3 CRISPR screens"/>
</dbReference>
<dbReference type="ChiTaRS" id="Hr46">
    <property type="organism name" value="fly"/>
</dbReference>
<dbReference type="GenomeRNAi" id="36073"/>
<dbReference type="PRO" id="PR:P31396"/>
<dbReference type="Proteomes" id="UP000000803">
    <property type="component" value="Chromosome 2R"/>
</dbReference>
<dbReference type="Bgee" id="FBgn0000448">
    <property type="expression patterns" value="Expressed in lamina monopolar neuron L3 (Drosophila) in insect head and 182 other cell types or tissues"/>
</dbReference>
<dbReference type="ExpressionAtlas" id="P31396">
    <property type="expression patterns" value="baseline and differential"/>
</dbReference>
<dbReference type="GO" id="GO:0005634">
    <property type="term" value="C:nucleus"/>
    <property type="evidence" value="ECO:0000314"/>
    <property type="project" value="FlyBase"/>
</dbReference>
<dbReference type="GO" id="GO:0004879">
    <property type="term" value="F:nuclear receptor activity"/>
    <property type="evidence" value="ECO:0000314"/>
    <property type="project" value="FlyBase"/>
</dbReference>
<dbReference type="GO" id="GO:0000978">
    <property type="term" value="F:RNA polymerase II cis-regulatory region sequence-specific DNA binding"/>
    <property type="evidence" value="ECO:0000318"/>
    <property type="project" value="GO_Central"/>
</dbReference>
<dbReference type="GO" id="GO:0000977">
    <property type="term" value="F:RNA polymerase II transcription regulatory region sequence-specific DNA binding"/>
    <property type="evidence" value="ECO:0000314"/>
    <property type="project" value="FlyBase"/>
</dbReference>
<dbReference type="GO" id="GO:0008270">
    <property type="term" value="F:zinc ion binding"/>
    <property type="evidence" value="ECO:0007669"/>
    <property type="project" value="UniProtKB-KW"/>
</dbReference>
<dbReference type="GO" id="GO:0001752">
    <property type="term" value="P:compound eye photoreceptor fate commitment"/>
    <property type="evidence" value="ECO:0000315"/>
    <property type="project" value="FlyBase"/>
</dbReference>
<dbReference type="GO" id="GO:0007552">
    <property type="term" value="P:metamorphosis"/>
    <property type="evidence" value="ECO:0000304"/>
    <property type="project" value="FlyBase"/>
</dbReference>
<dbReference type="GO" id="GO:0000122">
    <property type="term" value="P:negative regulation of transcription by RNA polymerase II"/>
    <property type="evidence" value="ECO:0000314"/>
    <property type="project" value="FlyBase"/>
</dbReference>
<dbReference type="GO" id="GO:0045944">
    <property type="term" value="P:positive regulation of transcription by RNA polymerase II"/>
    <property type="evidence" value="ECO:0000314"/>
    <property type="project" value="FlyBase"/>
</dbReference>
<dbReference type="GO" id="GO:0040034">
    <property type="term" value="P:regulation of development, heterochronic"/>
    <property type="evidence" value="ECO:0000304"/>
    <property type="project" value="FlyBase"/>
</dbReference>
<dbReference type="GO" id="GO:0006357">
    <property type="term" value="P:regulation of transcription by RNA polymerase II"/>
    <property type="evidence" value="ECO:0000318"/>
    <property type="project" value="GO_Central"/>
</dbReference>
<dbReference type="CDD" id="cd06968">
    <property type="entry name" value="NR_DBD_ROR"/>
    <property type="match status" value="1"/>
</dbReference>
<dbReference type="FunFam" id="1.10.565.10:FF:000037">
    <property type="entry name" value="Hormone receptor 3, isoform C"/>
    <property type="match status" value="1"/>
</dbReference>
<dbReference type="FunFam" id="3.30.50.10:FF:000003">
    <property type="entry name" value="Nuclear orphan receptor ROR-beta"/>
    <property type="match status" value="1"/>
</dbReference>
<dbReference type="Gene3D" id="3.30.50.10">
    <property type="entry name" value="Erythroid Transcription Factor GATA-1, subunit A"/>
    <property type="match status" value="1"/>
</dbReference>
<dbReference type="Gene3D" id="1.10.565.10">
    <property type="entry name" value="Retinoid X Receptor"/>
    <property type="match status" value="1"/>
</dbReference>
<dbReference type="InterPro" id="IPR035500">
    <property type="entry name" value="NHR-like_dom_sf"/>
</dbReference>
<dbReference type="InterPro" id="IPR044101">
    <property type="entry name" value="NR_DBD_ROR"/>
</dbReference>
<dbReference type="InterPro" id="IPR000536">
    <property type="entry name" value="Nucl_hrmn_rcpt_lig-bd"/>
</dbReference>
<dbReference type="InterPro" id="IPR001723">
    <property type="entry name" value="Nuclear_hrmn_rcpt"/>
</dbReference>
<dbReference type="InterPro" id="IPR001728">
    <property type="entry name" value="ThyrH_rcpt"/>
</dbReference>
<dbReference type="InterPro" id="IPR001628">
    <property type="entry name" value="Znf_hrmn_rcpt"/>
</dbReference>
<dbReference type="InterPro" id="IPR013088">
    <property type="entry name" value="Znf_NHR/GATA"/>
</dbReference>
<dbReference type="PANTHER" id="PTHR45805">
    <property type="entry name" value="NUCLEAR HORMONE RECEPTOR HR3-RELATED"/>
    <property type="match status" value="1"/>
</dbReference>
<dbReference type="PANTHER" id="PTHR45805:SF2">
    <property type="entry name" value="NUCLEAR HORMONE RECEPTOR HR3-RELATED"/>
    <property type="match status" value="1"/>
</dbReference>
<dbReference type="Pfam" id="PF00104">
    <property type="entry name" value="Hormone_recep"/>
    <property type="match status" value="1"/>
</dbReference>
<dbReference type="Pfam" id="PF00105">
    <property type="entry name" value="zf-C4"/>
    <property type="match status" value="1"/>
</dbReference>
<dbReference type="PRINTS" id="PR00398">
    <property type="entry name" value="STRDHORMONER"/>
</dbReference>
<dbReference type="PRINTS" id="PR00047">
    <property type="entry name" value="STROIDFINGER"/>
</dbReference>
<dbReference type="PRINTS" id="PR00546">
    <property type="entry name" value="THYROIDHORMR"/>
</dbReference>
<dbReference type="SMART" id="SM00430">
    <property type="entry name" value="HOLI"/>
    <property type="match status" value="1"/>
</dbReference>
<dbReference type="SMART" id="SM00399">
    <property type="entry name" value="ZnF_C4"/>
    <property type="match status" value="1"/>
</dbReference>
<dbReference type="SUPFAM" id="SSF57716">
    <property type="entry name" value="Glucocorticoid receptor-like (DNA-binding domain)"/>
    <property type="match status" value="1"/>
</dbReference>
<dbReference type="SUPFAM" id="SSF48508">
    <property type="entry name" value="Nuclear receptor ligand-binding domain"/>
    <property type="match status" value="1"/>
</dbReference>
<dbReference type="PROSITE" id="PS51843">
    <property type="entry name" value="NR_LBD"/>
    <property type="match status" value="1"/>
</dbReference>
<dbReference type="PROSITE" id="PS00031">
    <property type="entry name" value="NUCLEAR_REC_DBD_1"/>
    <property type="match status" value="1"/>
</dbReference>
<dbReference type="PROSITE" id="PS51030">
    <property type="entry name" value="NUCLEAR_REC_DBD_2"/>
    <property type="match status" value="1"/>
</dbReference>
<accession>P31396</accession>
<accession>Q9V5I0</accession>
<protein>
    <recommendedName>
        <fullName evidence="4">Probable nuclear hormone receptor HR3</fullName>
        <shortName evidence="4">dHR3</shortName>
    </recommendedName>
    <alternativeName>
        <fullName evidence="5">Nuclear receptor subfamily 1 group F member 4</fullName>
    </alternativeName>
</protein>
<gene>
    <name evidence="4 6" type="primary">Hr3</name>
    <name evidence="6" type="synonym">Hr46</name>
    <name evidence="6" type="ORF">CG11823</name>
</gene>
<comment type="function">
    <text>Putative receptor whose ligand is not yet known.</text>
</comment>
<comment type="subcellular location">
    <subcellularLocation>
        <location evidence="1">Nucleus</location>
    </subcellularLocation>
</comment>
<comment type="induction">
    <text>The expression of this protein is developmentally regulated showing peaks at midembryogenesis. HR3 transcription is ecdysone-induced.</text>
</comment>
<comment type="similarity">
    <text evidence="5">Belongs to the nuclear hormone receptor family. NR1 subfamily.</text>
</comment>
<keyword id="KW-0238">DNA-binding</keyword>
<keyword id="KW-0479">Metal-binding</keyword>
<keyword id="KW-0539">Nucleus</keyword>
<keyword id="KW-0675">Receptor</keyword>
<keyword id="KW-1185">Reference proteome</keyword>
<keyword id="KW-0804">Transcription</keyword>
<keyword id="KW-0805">Transcription regulation</keyword>
<keyword id="KW-0862">Zinc</keyword>
<keyword id="KW-0863">Zinc-finger</keyword>
<proteinExistence type="evidence at transcript level"/>
<sequence>MYTQRMFDMWSSVTSKLEAHANNLGQSNVQSPAGQNNSSGSIKAQIEIIPCKVCGDKSSGVHYGVITCEGCKGFFRRSQSSVVNYQCPRNKQCVVDRVNRNRCQYCRLQKCLKLGMSRDAVKFGRMSKKQREKVEDEVRFHRAQMRAQSDAAPDSSVYDTQTPSSSDQLHHNNYNSYSGGYSNNEVGYGSPYGYSASVTPQQTMQYDISADYVDSTTYEPRSTIIDPEFISHADGDINDVLIKTLAEAHANTNTKLEAVHDMFRKQPDVSRILYYKNLGQEELWLDCAEKLTQMIQNIIEFAKLIPGFMRLSQDDQILLLKTGSFELAIVRMSRLLDLSQNAVLYGDVMLPQEAFYTSDSEEMRLVSRIFQTAKSIAELKLTETELALYQSLVLLWPERNGVRGNTEIQRLFNLSMNAIRQELETNHAPLKGDVTVLDTLLNNIPNFRDISILHMESLSKFKLQHPNVVFPALYKELFSIDSQQDLT</sequence>
<name>HR3_DROME</name>
<feature type="chain" id="PRO_0000053519" description="Probable nuclear hormone receptor HR3">
    <location>
        <begin position="1"/>
        <end position="487"/>
    </location>
</feature>
<feature type="domain" description="NR LBD" evidence="2">
    <location>
        <begin position="237"/>
        <end position="480"/>
    </location>
</feature>
<feature type="DNA-binding region" description="Nuclear receptor" evidence="1">
    <location>
        <begin position="48"/>
        <end position="123"/>
    </location>
</feature>
<feature type="zinc finger region" description="NR C4-type" evidence="1">
    <location>
        <begin position="51"/>
        <end position="71"/>
    </location>
</feature>
<feature type="zinc finger region" description="NR C4-type" evidence="1">
    <location>
        <begin position="87"/>
        <end position="111"/>
    </location>
</feature>
<feature type="region of interest" description="Disordered" evidence="3">
    <location>
        <begin position="145"/>
        <end position="176"/>
    </location>
</feature>
<feature type="compositionally biased region" description="Polar residues" evidence="3">
    <location>
        <begin position="157"/>
        <end position="167"/>
    </location>
</feature>